<proteinExistence type="evidence at protein level"/>
<feature type="chain" id="PRO_0000183095" description="Crossover junction endodeoxyribonuclease RuvC">
    <location>
        <begin position="1"/>
        <end position="179"/>
    </location>
</feature>
<feature type="short sequence motif" description="DNA-binding loop" evidence="7">
    <location>
        <begin position="68"/>
        <end position="74"/>
    </location>
</feature>
<feature type="active site" evidence="3 7 8">
    <location>
        <position position="7"/>
    </location>
</feature>
<feature type="active site" evidence="3 7 8">
    <location>
        <position position="67"/>
    </location>
</feature>
<feature type="active site" evidence="3 7 8">
    <location>
        <position position="139"/>
    </location>
</feature>
<feature type="active site" evidence="7 8">
    <location>
        <position position="142"/>
    </location>
</feature>
<feature type="binding site" evidence="5">
    <location>
        <position position="7"/>
    </location>
    <ligand>
        <name>Mn(2+)</name>
        <dbReference type="ChEBI" id="CHEBI:29035"/>
        <label>1</label>
    </ligand>
</feature>
<feature type="binding site" evidence="5">
    <location>
        <position position="67"/>
    </location>
    <ligand>
        <name>Mn(2+)</name>
        <dbReference type="ChEBI" id="CHEBI:29035"/>
        <label>2</label>
    </ligand>
</feature>
<feature type="binding site" evidence="8">
    <location>
        <position position="139"/>
    </location>
    <ligand>
        <name>Mn(2+)</name>
        <dbReference type="ChEBI" id="CHEBI:29035"/>
        <label>1</label>
    </ligand>
</feature>
<feature type="mutagenesis site" description="Loss of Holliday junction (HJ) cleavage." evidence="5">
    <original>D</original>
    <variation>A</variation>
    <variation>N</variation>
    <location>
        <position position="7"/>
    </location>
</feature>
<feature type="mutagenesis site" description="Loss of HJ cleavage." evidence="4 5">
    <original>E</original>
    <variation>A</variation>
    <variation>Q</variation>
    <location>
        <position position="67"/>
    </location>
</feature>
<feature type="mutagenesis site" description="Loss of HJ cleavage." evidence="4 5">
    <original>H</original>
    <variation>A</variation>
    <location>
        <position position="139"/>
    </location>
</feature>
<feature type="mutagenesis site" description="Slightly decreased activity with Mn(2+), slighlty increased activity with Mg(2+)." evidence="5">
    <original>H</original>
    <variation>D</variation>
    <location>
        <position position="139"/>
    </location>
</feature>
<feature type="mutagenesis site" description="Loss of HJ cleavage." evidence="4 5">
    <original>D</original>
    <variation>A</variation>
    <variation>N</variation>
    <location>
        <position position="142"/>
    </location>
</feature>
<feature type="strand" evidence="11">
    <location>
        <begin position="2"/>
        <end position="7"/>
    </location>
</feature>
<feature type="strand" evidence="11">
    <location>
        <begin position="10"/>
        <end position="20"/>
    </location>
</feature>
<feature type="strand" evidence="11">
    <location>
        <begin position="25"/>
        <end position="34"/>
    </location>
</feature>
<feature type="helix" evidence="11">
    <location>
        <begin position="41"/>
        <end position="59"/>
    </location>
</feature>
<feature type="strand" evidence="11">
    <location>
        <begin position="62"/>
        <end position="67"/>
    </location>
</feature>
<feature type="helix" evidence="11">
    <location>
        <begin position="75"/>
        <end position="94"/>
    </location>
</feature>
<feature type="strand" evidence="11">
    <location>
        <begin position="99"/>
        <end position="102"/>
    </location>
</feature>
<feature type="helix" evidence="11">
    <location>
        <begin position="104"/>
        <end position="112"/>
    </location>
</feature>
<feature type="helix" evidence="11">
    <location>
        <begin position="119"/>
        <end position="130"/>
    </location>
</feature>
<feature type="helix" evidence="11">
    <location>
        <begin position="138"/>
        <end position="153"/>
    </location>
</feature>
<reference key="1">
    <citation type="journal article" date="1999" name="Science">
        <title>Genome sequence of the radioresistant bacterium Deinococcus radiodurans R1.</title>
        <authorList>
            <person name="White O."/>
            <person name="Eisen J.A."/>
            <person name="Heidelberg J.F."/>
            <person name="Hickey E.K."/>
            <person name="Peterson J.D."/>
            <person name="Dodson R.J."/>
            <person name="Haft D.H."/>
            <person name="Gwinn M.L."/>
            <person name="Nelson W.C."/>
            <person name="Richardson D.L."/>
            <person name="Moffat K.S."/>
            <person name="Qin H."/>
            <person name="Jiang L."/>
            <person name="Pamphile W."/>
            <person name="Crosby M."/>
            <person name="Shen M."/>
            <person name="Vamathevan J.J."/>
            <person name="Lam P."/>
            <person name="McDonald L.A."/>
            <person name="Utterback T.R."/>
            <person name="Zalewski C."/>
            <person name="Makarova K.S."/>
            <person name="Aravind L."/>
            <person name="Daly M.J."/>
            <person name="Minton K.W."/>
            <person name="Fleischmann R.D."/>
            <person name="Ketchum K.A."/>
            <person name="Nelson K.E."/>
            <person name="Salzberg S.L."/>
            <person name="Smith H.O."/>
            <person name="Venter J.C."/>
            <person name="Fraser C.M."/>
        </authorList>
    </citation>
    <scope>NUCLEOTIDE SEQUENCE [LARGE SCALE GENOMIC DNA]</scope>
    <source>
        <strain>ATCC 13939 / DSM 20539 / JCM 16871 / CCUG 27074 / LMG 4051 / NBRC 15346 / NCIMB 9279 / VKM B-1422 / R1</strain>
    </source>
</reference>
<reference evidence="10" key="2">
    <citation type="journal article" date="2022" name="Microorganisms">
        <title>Structural and Functional Characterization of the Holliday Junction Resolvase RuvC from Deinococcus radiodurans.</title>
        <authorList>
            <person name="Qin C."/>
            <person name="Han W."/>
            <person name="Xu Y."/>
            <person name="Zhao Y."/>
            <person name="Xu H."/>
            <person name="Tian B."/>
            <person name="Wang L."/>
            <person name="Hua Y."/>
        </authorList>
    </citation>
    <scope>X-RAY CRYSTALLOGRAPHY (1.60 ANGSTROMS)</scope>
    <scope>FUNCTION</scope>
    <scope>PROBABLE ACTIVE SITES</scope>
    <scope>CATALYTIC ACTIVITY</scope>
    <scope>COFACTOR</scope>
    <scope>SUBUNIT</scope>
    <scope>DNA-BINDING</scope>
    <scope>MOTIF</scope>
    <scope>MUTAGENESIS OF ASP-7; GLU-67; HIS-139 AND ASP-142</scope>
    <source>
        <strain>ATCC 13939 / DSM 20539 / JCM 16871 / CCUG 27074 / LMG 4051 / NBRC 15346 / NCIMB 9279 / VKM B-1422 / R1</strain>
    </source>
</reference>
<reference evidence="9" key="3">
    <citation type="journal article" date="2022" name="MBio">
        <title>Biochemical and Structural Study of RuvC and YqgF from Deinococcus radiodurans.</title>
        <authorList>
            <person name="Sun Y."/>
            <person name="Yang J."/>
            <person name="Xu G."/>
            <person name="Cheng K."/>
        </authorList>
    </citation>
    <scope>X-RAY CRYSTALLOGRAPHY (2.75 ANGSTROMS) IN COMPLEX WITH MG(2+)</scope>
    <scope>PROBABLE ACTIVE SITES</scope>
    <scope>CATALYTIC ACTIVITY</scope>
    <scope>COFACTOR</scope>
    <scope>SUBUNIT</scope>
    <scope>DISRUPTION PHENOTYPE</scope>
    <scope>DNA-BINDING</scope>
    <scope>MUTAGENESIS OF ASP-7; GLU-67; HIS-139 AND ASP-142</scope>
    <source>
        <strain>ATCC 13939 / DSM 20539 / JCM 16871 / CCUG 27074 / LMG 4051 / NBRC 15346 / NCIMB 9279 / VKM B-1422 / R1</strain>
    </source>
</reference>
<organism>
    <name type="scientific">Deinococcus radiodurans (strain ATCC 13939 / DSM 20539 / JCM 16871 / CCUG 27074 / LMG 4051 / NBRC 15346 / NCIMB 9279 / VKM B-1422 / R1)</name>
    <dbReference type="NCBI Taxonomy" id="243230"/>
    <lineage>
        <taxon>Bacteria</taxon>
        <taxon>Thermotogati</taxon>
        <taxon>Deinococcota</taxon>
        <taxon>Deinococci</taxon>
        <taxon>Deinococcales</taxon>
        <taxon>Deinococcaceae</taxon>
        <taxon>Deinococcus</taxon>
    </lineage>
</organism>
<protein>
    <recommendedName>
        <fullName evidence="3">Crossover junction endodeoxyribonuclease RuvC</fullName>
        <ecNumber evidence="3 4 5">3.1.21.10</ecNumber>
    </recommendedName>
    <alternativeName>
        <fullName evidence="3">Holliday junction nuclease RuvC</fullName>
    </alternativeName>
    <alternativeName>
        <fullName evidence="3 6">Holliday junction resolvase RuvC</fullName>
    </alternativeName>
</protein>
<dbReference type="EC" id="3.1.21.10" evidence="3 4 5"/>
<dbReference type="EMBL" id="AE000513">
    <property type="protein sequence ID" value="AAF10018.1"/>
    <property type="molecule type" value="Genomic_DNA"/>
</dbReference>
<dbReference type="PIR" id="F75519">
    <property type="entry name" value="F75519"/>
</dbReference>
<dbReference type="RefSeq" id="NP_294163.1">
    <property type="nucleotide sequence ID" value="NC_001263.1"/>
</dbReference>
<dbReference type="RefSeq" id="WP_010887085.1">
    <property type="nucleotide sequence ID" value="NC_001263.1"/>
</dbReference>
<dbReference type="PDB" id="7W8D">
    <property type="method" value="X-ray"/>
    <property type="resolution" value="2.75 A"/>
    <property type="chains" value="A/B=1-179"/>
</dbReference>
<dbReference type="PDB" id="7XHJ">
    <property type="method" value="X-ray"/>
    <property type="resolution" value="1.60 A"/>
    <property type="chains" value="A/B=1-179"/>
</dbReference>
<dbReference type="PDBsum" id="7W8D"/>
<dbReference type="PDBsum" id="7XHJ"/>
<dbReference type="SMR" id="Q9RX75"/>
<dbReference type="STRING" id="243230.DR_0440"/>
<dbReference type="PaxDb" id="243230-DR_0440"/>
<dbReference type="EnsemblBacteria" id="AAF10018">
    <property type="protein sequence ID" value="AAF10018"/>
    <property type="gene ID" value="DR_0440"/>
</dbReference>
<dbReference type="GeneID" id="69516673"/>
<dbReference type="KEGG" id="dra:DR_0440"/>
<dbReference type="PATRIC" id="fig|243230.17.peg.615"/>
<dbReference type="eggNOG" id="COG0817">
    <property type="taxonomic scope" value="Bacteria"/>
</dbReference>
<dbReference type="HOGENOM" id="CLU_091257_3_1_0"/>
<dbReference type="InParanoid" id="Q9RX75"/>
<dbReference type="OrthoDB" id="9805499at2"/>
<dbReference type="Proteomes" id="UP000002524">
    <property type="component" value="Chromosome 1"/>
</dbReference>
<dbReference type="GO" id="GO:0005737">
    <property type="term" value="C:cytoplasm"/>
    <property type="evidence" value="ECO:0007669"/>
    <property type="project" value="UniProtKB-SubCell"/>
</dbReference>
<dbReference type="GO" id="GO:0048476">
    <property type="term" value="C:Holliday junction resolvase complex"/>
    <property type="evidence" value="ECO:0007669"/>
    <property type="project" value="UniProtKB-UniRule"/>
</dbReference>
<dbReference type="GO" id="GO:0008821">
    <property type="term" value="F:crossover junction DNA endonuclease activity"/>
    <property type="evidence" value="ECO:0007669"/>
    <property type="project" value="UniProtKB-UniRule"/>
</dbReference>
<dbReference type="GO" id="GO:0003677">
    <property type="term" value="F:DNA binding"/>
    <property type="evidence" value="ECO:0007669"/>
    <property type="project" value="UniProtKB-KW"/>
</dbReference>
<dbReference type="GO" id="GO:0000287">
    <property type="term" value="F:magnesium ion binding"/>
    <property type="evidence" value="ECO:0007669"/>
    <property type="project" value="UniProtKB-UniRule"/>
</dbReference>
<dbReference type="GO" id="GO:0006310">
    <property type="term" value="P:DNA recombination"/>
    <property type="evidence" value="ECO:0007669"/>
    <property type="project" value="UniProtKB-UniRule"/>
</dbReference>
<dbReference type="GO" id="GO:0006281">
    <property type="term" value="P:DNA repair"/>
    <property type="evidence" value="ECO:0007669"/>
    <property type="project" value="UniProtKB-UniRule"/>
</dbReference>
<dbReference type="CDD" id="cd16962">
    <property type="entry name" value="RuvC"/>
    <property type="match status" value="1"/>
</dbReference>
<dbReference type="FunFam" id="3.30.420.10:FF:000002">
    <property type="entry name" value="Crossover junction endodeoxyribonuclease RuvC"/>
    <property type="match status" value="1"/>
</dbReference>
<dbReference type="Gene3D" id="3.30.420.10">
    <property type="entry name" value="Ribonuclease H-like superfamily/Ribonuclease H"/>
    <property type="match status" value="1"/>
</dbReference>
<dbReference type="HAMAP" id="MF_00034">
    <property type="entry name" value="RuvC"/>
    <property type="match status" value="1"/>
</dbReference>
<dbReference type="InterPro" id="IPR012337">
    <property type="entry name" value="RNaseH-like_sf"/>
</dbReference>
<dbReference type="InterPro" id="IPR036397">
    <property type="entry name" value="RNaseH_sf"/>
</dbReference>
<dbReference type="InterPro" id="IPR002176">
    <property type="entry name" value="X-over_junc_endoDNase_RuvC"/>
</dbReference>
<dbReference type="NCBIfam" id="TIGR00228">
    <property type="entry name" value="ruvC"/>
    <property type="match status" value="1"/>
</dbReference>
<dbReference type="PANTHER" id="PTHR30194">
    <property type="entry name" value="CROSSOVER JUNCTION ENDODEOXYRIBONUCLEASE RUVC"/>
    <property type="match status" value="1"/>
</dbReference>
<dbReference type="PANTHER" id="PTHR30194:SF3">
    <property type="entry name" value="CROSSOVER JUNCTION ENDODEOXYRIBONUCLEASE RUVC"/>
    <property type="match status" value="1"/>
</dbReference>
<dbReference type="Pfam" id="PF02075">
    <property type="entry name" value="RuvC"/>
    <property type="match status" value="1"/>
</dbReference>
<dbReference type="PRINTS" id="PR00696">
    <property type="entry name" value="RSOLVASERUVC"/>
</dbReference>
<dbReference type="SUPFAM" id="SSF53098">
    <property type="entry name" value="Ribonuclease H-like"/>
    <property type="match status" value="1"/>
</dbReference>
<name>RUVC_DEIRA</name>
<accession>Q9RX75</accession>
<sequence length="179" mass="19652">MRVLGIDPGLANLGLGLVEGDVRRAKHLYHVCLTTESAWLMPRRLQYLHEELTRLLTEYRPDAVAIEDQILRRQADVAFKVGQAFGVVQLACAQAGVPIHAYGPMQVKKSLVGTGRADKEQVIYMVKASLGIRELFNNHAADALALALTHLAHAPMQERSERLAAAGRAARTGDAPLRR</sequence>
<evidence type="ECO:0000250" key="1">
    <source>
        <dbReference type="UniProtKB" id="P0A814"/>
    </source>
</evidence>
<evidence type="ECO:0000250" key="2">
    <source>
        <dbReference type="UniProtKB" id="Q5SJC4"/>
    </source>
</evidence>
<evidence type="ECO:0000255" key="3">
    <source>
        <dbReference type="HAMAP-Rule" id="MF_00034"/>
    </source>
</evidence>
<evidence type="ECO:0000269" key="4">
    <source>
    </source>
</evidence>
<evidence type="ECO:0000269" key="5">
    <source>
    </source>
</evidence>
<evidence type="ECO:0000303" key="6">
    <source>
    </source>
</evidence>
<evidence type="ECO:0000305" key="7">
    <source>
    </source>
</evidence>
<evidence type="ECO:0000305" key="8">
    <source>
    </source>
</evidence>
<evidence type="ECO:0000312" key="9">
    <source>
        <dbReference type="PDB" id="7W8D"/>
    </source>
</evidence>
<evidence type="ECO:0000312" key="10">
    <source>
        <dbReference type="PDB" id="7XHJ"/>
    </source>
</evidence>
<evidence type="ECO:0007829" key="11">
    <source>
        <dbReference type="PDB" id="7XHJ"/>
    </source>
</evidence>
<gene>
    <name evidence="3 6" type="primary">ruvC</name>
    <name type="ordered locus">DR_0440</name>
</gene>
<comment type="function">
    <text evidence="1 4 5">The RuvA-RuvB-RuvC complex processes Holliday junction (HJ) DNA during genetic recombination and DNA repair (PubMed:36000732). Endonuclease that resolves HJ intermediates (PubMed:35744678, PubMed:36000732). Cleaves cruciform DNA by making single-stranded nicks across the HJ at symmetrical positions within the homologous arms, probably yielding a 5'-phosphate and a 3'-hydroxyl group; requires a central core of homology in the junction (PubMed:35744678, PubMed:36000732). The consensus cleavage sequence is 5'-(G/C)TC(C/G)-3' (a different site than E.coli); cleavage occurs on the 3'-side of the TC dinucleotide at the point of strand exchange (PubMed:36000732). Also resolves nicked HJ intermediates, replication forks and Y-junction DNA in vitro (PubMed:36000732). HJ branch migration catalyzed by RuvA-RuvB allows RuvC to scan DNA until it finds its consensus sequence, where it cleaves and resolves the cruciform DNA (By similarity).</text>
</comment>
<comment type="function">
    <text evidence="4 5">Binds HJ DNA independently of homologous core or consensus sequence; Mn(2+) is not essential for binding but improves it, while &gt;1.0 mM Mg(2+) inhibit binding. Also binds Y-junction DNA less well. Requires a homologous core to cleave DNA (PubMed:35744678). Another study shows divalent cations (Mn(2+), Mg(2+) and Ca(2+), tested up to 5.0 mM) improve DNA binding considerably over binding in their absence (PubMed:36000732).</text>
</comment>
<comment type="catalytic activity">
    <reaction evidence="3 4 5">
        <text>Endonucleolytic cleavage at a junction such as a reciprocal single-stranded crossover between two homologous DNA duplexes (Holliday junction).</text>
        <dbReference type="EC" id="3.1.21.10"/>
    </reaction>
</comment>
<comment type="cofactor">
    <cofactor evidence="4">
        <name>Mn(2+)</name>
        <dbReference type="ChEBI" id="CHEBI:29035"/>
    </cofactor>
    <text evidence="2 4 5">In vitro only Mn(2+) supports endonuclease activity; Mg(2+) inhibits binding to HJ DNA (PubMed:35744678). Another study shows Mn(2+) is the preferred cofactor but Mg(2+) does support cleavage (PubMed:36000732). Binds 2 Mn(2+) ion per subunit (By similarity).</text>
</comment>
<comment type="subunit">
    <text evidence="3 4">Homodimer which binds Holliday junction (HJ) DNA (PubMed:35744678). The HJ becomes 2-fold symmetrical on binding to RuvC with unstacked arms; it has a different conformation from HJ DNA in complex with RuvA. In the full resolvosome a probable DNA-RuvA(4)-RuvB(12)-RuvC(2) complex forms which resolves the HJ.</text>
</comment>
<comment type="subcellular location">
    <subcellularLocation>
        <location evidence="3">Cytoplasm</location>
    </subcellularLocation>
</comment>
<comment type="disruption phenotype">
    <text evidence="5">Only heterozygous strains can be obtained, suggesting this gene is essential.</text>
</comment>
<comment type="miscellaneous">
    <text evidence="7">D.radiodurans metalloenzymes exhibit a strong preference for Mn(2+) rather than Mg(2+).</text>
</comment>
<comment type="similarity">
    <text evidence="3">Belongs to the RuvC family.</text>
</comment>
<keyword id="KW-0002">3D-structure</keyword>
<keyword id="KW-0963">Cytoplasm</keyword>
<keyword id="KW-0227">DNA damage</keyword>
<keyword id="KW-0233">DNA recombination</keyword>
<keyword id="KW-0234">DNA repair</keyword>
<keyword id="KW-0238">DNA-binding</keyword>
<keyword id="KW-0255">Endonuclease</keyword>
<keyword id="KW-0378">Hydrolase</keyword>
<keyword id="KW-0460">Magnesium</keyword>
<keyword id="KW-0479">Metal-binding</keyword>
<keyword id="KW-0540">Nuclease</keyword>
<keyword id="KW-1185">Reference proteome</keyword>